<dbReference type="EMBL" id="AE005674">
    <property type="protein sequence ID" value="AAN44365.1"/>
    <property type="molecule type" value="Genomic_DNA"/>
</dbReference>
<dbReference type="EMBL" id="AE014073">
    <property type="protein sequence ID" value="AAP18187.1"/>
    <property type="molecule type" value="Genomic_DNA"/>
</dbReference>
<dbReference type="RefSeq" id="NP_708658.1">
    <property type="nucleotide sequence ID" value="NC_004337.2"/>
</dbReference>
<dbReference type="RefSeq" id="WP_000806987.1">
    <property type="nucleotide sequence ID" value="NZ_WPGW01000018.1"/>
</dbReference>
<dbReference type="SMR" id="Q7ZAM0"/>
<dbReference type="STRING" id="198214.SF2880"/>
<dbReference type="PaxDb" id="198214-SF2880"/>
<dbReference type="GeneID" id="1025811"/>
<dbReference type="KEGG" id="sfl:SF2880"/>
<dbReference type="KEGG" id="sfx:S3079"/>
<dbReference type="PATRIC" id="fig|198214.7.peg.3427"/>
<dbReference type="HOGENOM" id="CLU_027562_9_0_6"/>
<dbReference type="Proteomes" id="UP000001006">
    <property type="component" value="Chromosome"/>
</dbReference>
<dbReference type="Proteomes" id="UP000002673">
    <property type="component" value="Chromosome"/>
</dbReference>
<dbReference type="GO" id="GO:0005737">
    <property type="term" value="C:cytoplasm"/>
    <property type="evidence" value="ECO:0007669"/>
    <property type="project" value="UniProtKB-SubCell"/>
</dbReference>
<dbReference type="GO" id="GO:0003677">
    <property type="term" value="F:DNA binding"/>
    <property type="evidence" value="ECO:0007669"/>
    <property type="project" value="UniProtKB-KW"/>
</dbReference>
<dbReference type="GO" id="GO:0009037">
    <property type="term" value="F:tyrosine-based site-specific recombinase activity"/>
    <property type="evidence" value="ECO:0007669"/>
    <property type="project" value="UniProtKB-UniRule"/>
</dbReference>
<dbReference type="GO" id="GO:0051301">
    <property type="term" value="P:cell division"/>
    <property type="evidence" value="ECO:0007669"/>
    <property type="project" value="UniProtKB-KW"/>
</dbReference>
<dbReference type="GO" id="GO:0007059">
    <property type="term" value="P:chromosome segregation"/>
    <property type="evidence" value="ECO:0007669"/>
    <property type="project" value="UniProtKB-UniRule"/>
</dbReference>
<dbReference type="GO" id="GO:0006313">
    <property type="term" value="P:DNA transposition"/>
    <property type="evidence" value="ECO:0007669"/>
    <property type="project" value="UniProtKB-UniRule"/>
</dbReference>
<dbReference type="CDD" id="cd00798">
    <property type="entry name" value="INT_XerDC_C"/>
    <property type="match status" value="1"/>
</dbReference>
<dbReference type="FunFam" id="1.10.150.130:FF:000002">
    <property type="entry name" value="Tyrosine recombinase XerD"/>
    <property type="match status" value="1"/>
</dbReference>
<dbReference type="FunFam" id="1.10.443.10:FF:000001">
    <property type="entry name" value="Tyrosine recombinase XerD"/>
    <property type="match status" value="1"/>
</dbReference>
<dbReference type="Gene3D" id="1.10.150.130">
    <property type="match status" value="1"/>
</dbReference>
<dbReference type="Gene3D" id="1.10.443.10">
    <property type="entry name" value="Intergrase catalytic core"/>
    <property type="match status" value="1"/>
</dbReference>
<dbReference type="HAMAP" id="MF_01808">
    <property type="entry name" value="Recomb_XerC_XerD"/>
    <property type="match status" value="1"/>
</dbReference>
<dbReference type="HAMAP" id="MF_01807">
    <property type="entry name" value="Recomb_XerD"/>
    <property type="match status" value="1"/>
</dbReference>
<dbReference type="InterPro" id="IPR044068">
    <property type="entry name" value="CB"/>
</dbReference>
<dbReference type="InterPro" id="IPR011010">
    <property type="entry name" value="DNA_brk_join_enz"/>
</dbReference>
<dbReference type="InterPro" id="IPR013762">
    <property type="entry name" value="Integrase-like_cat_sf"/>
</dbReference>
<dbReference type="InterPro" id="IPR002104">
    <property type="entry name" value="Integrase_catalytic"/>
</dbReference>
<dbReference type="InterPro" id="IPR010998">
    <property type="entry name" value="Integrase_recombinase_N"/>
</dbReference>
<dbReference type="InterPro" id="IPR004107">
    <property type="entry name" value="Integrase_SAM-like_N"/>
</dbReference>
<dbReference type="InterPro" id="IPR011932">
    <property type="entry name" value="Recomb_XerD"/>
</dbReference>
<dbReference type="InterPro" id="IPR023009">
    <property type="entry name" value="Tyrosine_recombinase_XerC/XerD"/>
</dbReference>
<dbReference type="InterPro" id="IPR050090">
    <property type="entry name" value="Tyrosine_recombinase_XerCD"/>
</dbReference>
<dbReference type="NCBIfam" id="NF001399">
    <property type="entry name" value="PRK00283.1"/>
    <property type="match status" value="1"/>
</dbReference>
<dbReference type="NCBIfam" id="TIGR02225">
    <property type="entry name" value="recomb_XerD"/>
    <property type="match status" value="1"/>
</dbReference>
<dbReference type="PANTHER" id="PTHR30349">
    <property type="entry name" value="PHAGE INTEGRASE-RELATED"/>
    <property type="match status" value="1"/>
</dbReference>
<dbReference type="PANTHER" id="PTHR30349:SF90">
    <property type="entry name" value="TYROSINE RECOMBINASE XERD"/>
    <property type="match status" value="1"/>
</dbReference>
<dbReference type="Pfam" id="PF02899">
    <property type="entry name" value="Phage_int_SAM_1"/>
    <property type="match status" value="1"/>
</dbReference>
<dbReference type="Pfam" id="PF00589">
    <property type="entry name" value="Phage_integrase"/>
    <property type="match status" value="1"/>
</dbReference>
<dbReference type="SUPFAM" id="SSF56349">
    <property type="entry name" value="DNA breaking-rejoining enzymes"/>
    <property type="match status" value="1"/>
</dbReference>
<dbReference type="SUPFAM" id="SSF47823">
    <property type="entry name" value="lambda integrase-like, N-terminal domain"/>
    <property type="match status" value="1"/>
</dbReference>
<dbReference type="PROSITE" id="PS51900">
    <property type="entry name" value="CB"/>
    <property type="match status" value="1"/>
</dbReference>
<dbReference type="PROSITE" id="PS51898">
    <property type="entry name" value="TYR_RECOMBINASE"/>
    <property type="match status" value="1"/>
</dbReference>
<comment type="function">
    <text evidence="1">Site-specific tyrosine recombinase, which acts by catalyzing the cutting and rejoining of the recombining DNA molecules. Binds cooperatively to specific DNA consensus sequences that are separated from XerC binding sites by a short central region, forming the heterotetrameric XerC-XerD complex that recombines DNA substrates. The complex is essential to convert dimers of the bacterial chromosome into monomers to permit their segregation at cell division. It also contributes to the segregational stability of plasmids. In the complex XerD specifically exchanges the bottom DNA strands.</text>
</comment>
<comment type="activity regulation">
    <text evidence="1">FtsK may regulate the catalytic switch between XerC and XerD in the heterotetrameric complex during the two steps of the recombination process.</text>
</comment>
<comment type="subunit">
    <text evidence="1">Forms a cyclic heterotetrameric complex composed of two molecules of XerC and two molecules of XerD, in which XerC interacts with XerD via its C-terminal region, XerD interacts with XerC via its C-terminal region and so on.</text>
</comment>
<comment type="subcellular location">
    <subcellularLocation>
        <location evidence="1">Cytoplasm</location>
    </subcellularLocation>
</comment>
<comment type="similarity">
    <text evidence="1">Belongs to the 'phage' integrase family. XerD subfamily.</text>
</comment>
<keyword id="KW-0131">Cell cycle</keyword>
<keyword id="KW-0132">Cell division</keyword>
<keyword id="KW-0159">Chromosome partition</keyword>
<keyword id="KW-0963">Cytoplasm</keyword>
<keyword id="KW-0229">DNA integration</keyword>
<keyword id="KW-0233">DNA recombination</keyword>
<keyword id="KW-0238">DNA-binding</keyword>
<keyword id="KW-1185">Reference proteome</keyword>
<reference key="1">
    <citation type="journal article" date="2002" name="Nucleic Acids Res.">
        <title>Genome sequence of Shigella flexneri 2a: insights into pathogenicity through comparison with genomes of Escherichia coli K12 and O157.</title>
        <authorList>
            <person name="Jin Q."/>
            <person name="Yuan Z."/>
            <person name="Xu J."/>
            <person name="Wang Y."/>
            <person name="Shen Y."/>
            <person name="Lu W."/>
            <person name="Wang J."/>
            <person name="Liu H."/>
            <person name="Yang J."/>
            <person name="Yang F."/>
            <person name="Zhang X."/>
            <person name="Zhang J."/>
            <person name="Yang G."/>
            <person name="Wu H."/>
            <person name="Qu D."/>
            <person name="Dong J."/>
            <person name="Sun L."/>
            <person name="Xue Y."/>
            <person name="Zhao A."/>
            <person name="Gao Y."/>
            <person name="Zhu J."/>
            <person name="Kan B."/>
            <person name="Ding K."/>
            <person name="Chen S."/>
            <person name="Cheng H."/>
            <person name="Yao Z."/>
            <person name="He B."/>
            <person name="Chen R."/>
            <person name="Ma D."/>
            <person name="Qiang B."/>
            <person name="Wen Y."/>
            <person name="Hou Y."/>
            <person name="Yu J."/>
        </authorList>
    </citation>
    <scope>NUCLEOTIDE SEQUENCE [LARGE SCALE GENOMIC DNA]</scope>
    <source>
        <strain>301 / Serotype 2a</strain>
    </source>
</reference>
<reference key="2">
    <citation type="journal article" date="2003" name="Infect. Immun.">
        <title>Complete genome sequence and comparative genomics of Shigella flexneri serotype 2a strain 2457T.</title>
        <authorList>
            <person name="Wei J."/>
            <person name="Goldberg M.B."/>
            <person name="Burland V."/>
            <person name="Venkatesan M.M."/>
            <person name="Deng W."/>
            <person name="Fournier G."/>
            <person name="Mayhew G.F."/>
            <person name="Plunkett G. III"/>
            <person name="Rose D.J."/>
            <person name="Darling A."/>
            <person name="Mau B."/>
            <person name="Perna N.T."/>
            <person name="Payne S.M."/>
            <person name="Runyen-Janecky L.J."/>
            <person name="Zhou S."/>
            <person name="Schwartz D.C."/>
            <person name="Blattner F.R."/>
        </authorList>
    </citation>
    <scope>NUCLEOTIDE SEQUENCE [LARGE SCALE GENOMIC DNA]</scope>
    <source>
        <strain>ATCC 700930 / 2457T / Serotype 2a</strain>
    </source>
</reference>
<feature type="chain" id="PRO_0000095415" description="Tyrosine recombinase XerD">
    <location>
        <begin position="1"/>
        <end position="298"/>
    </location>
</feature>
<feature type="domain" description="Core-binding (CB)" evidence="3">
    <location>
        <begin position="2"/>
        <end position="87"/>
    </location>
</feature>
<feature type="domain" description="Tyr recombinase" evidence="2">
    <location>
        <begin position="108"/>
        <end position="292"/>
    </location>
</feature>
<feature type="active site" evidence="1">
    <location>
        <position position="148"/>
    </location>
</feature>
<feature type="active site" evidence="1">
    <location>
        <position position="172"/>
    </location>
</feature>
<feature type="active site" evidence="1">
    <location>
        <position position="244"/>
    </location>
</feature>
<feature type="active site" evidence="1">
    <location>
        <position position="247"/>
    </location>
</feature>
<feature type="active site" evidence="1">
    <location>
        <position position="270"/>
    </location>
</feature>
<feature type="active site" description="O-(3'-phospho-DNA)-tyrosine intermediate" evidence="1">
    <location>
        <position position="279"/>
    </location>
</feature>
<name>XERD_SHIFL</name>
<evidence type="ECO:0000255" key="1">
    <source>
        <dbReference type="HAMAP-Rule" id="MF_01807"/>
    </source>
</evidence>
<evidence type="ECO:0000255" key="2">
    <source>
        <dbReference type="PROSITE-ProRule" id="PRU01246"/>
    </source>
</evidence>
<evidence type="ECO:0000255" key="3">
    <source>
        <dbReference type="PROSITE-ProRule" id="PRU01248"/>
    </source>
</evidence>
<sequence length="298" mass="34260">MKQELARIEQFLDALWLEKNLAENTLNAYRRDLSMMVEWLHHRGLTLATAQSDDLQALLAERLEGGYKATSSARLLSAVRRLFQYLYREKFREDDPSAHLASPKLPQRLPKDLSEAQVERLLQAPLIDQPLELRDKAMLEVLYATGLRVSELVGLTMSDISLRQGVVRVIGKGNKERLVPLGEEAVYWLETYLEHGRPWLLNGVSIDVLFPSQRAQQMTRQTFWHRIKHYAVLAGIDSEKLSPHVLRHAFATHLLNHGADLRVVQMLLGHSDLSTTQIYTHVATERLRQLHQQHHPRA</sequence>
<protein>
    <recommendedName>
        <fullName evidence="1">Tyrosine recombinase XerD</fullName>
    </recommendedName>
</protein>
<proteinExistence type="inferred from homology"/>
<organism>
    <name type="scientific">Shigella flexneri</name>
    <dbReference type="NCBI Taxonomy" id="623"/>
    <lineage>
        <taxon>Bacteria</taxon>
        <taxon>Pseudomonadati</taxon>
        <taxon>Pseudomonadota</taxon>
        <taxon>Gammaproteobacteria</taxon>
        <taxon>Enterobacterales</taxon>
        <taxon>Enterobacteriaceae</taxon>
        <taxon>Shigella</taxon>
    </lineage>
</organism>
<gene>
    <name evidence="1" type="primary">xerD</name>
    <name type="ordered locus">SF2880</name>
    <name type="ordered locus">S3079</name>
</gene>
<accession>Q7ZAM0</accession>